<name>SYP_BURO1</name>
<evidence type="ECO:0000255" key="1">
    <source>
        <dbReference type="HAMAP-Rule" id="MF_01569"/>
    </source>
</evidence>
<proteinExistence type="inferred from homology"/>
<sequence length="578" mass="63827">MKASRFFIGTLKEAPADAEIVSHKLMVRAGMIRRVAGGIYNYLPVGLRSIRKVEAIVREEMNRAGAIELLMPAVQPAELWQESGRWEQYGPELLRFKDRKDNDFVIGPTHEEVVTDIARNQIKSYRQMPVNFYQIQTKFRDEIRPRFGVMRGREFIMKDAYSFDKDAAGLNESYRKMYDAYVRIFTRLGLEFRAVAADSGSIGGNFSHEFHVIADTGEDAIAYCPTSEFAANVEAAEALPLIAERAAPAEAMEKVATPGKAKCEAVAELLSIPLERTIKSIVLATDNEGAEPTIWLVMLRGDHDLNEIKASKLPGLKNHRFATEQEIVEWFGTPPGYLGPVGTKKPVKVIADRTVANMSDFVVGANEVDYHIAGVNWGRDLPEPEVADVRNVKKGDPSPDGKGVIDICRGIEVGHVFQLGTKYSEAMGATFLDESGKPQPMLMGCYGVGITRILGAAIEQNFDDKGIIWPESIAPFEVVLCPMGYDRSDMVRETADKLYAELVAAGIDVILDDRGERPGVMFADWELIGVPHRLVIGERGLKEGKIEYQGRRDAEATLLPADTAAAAVAEKIRAALAH</sequence>
<protein>
    <recommendedName>
        <fullName evidence="1">Proline--tRNA ligase</fullName>
        <ecNumber evidence="1">6.1.1.15</ecNumber>
    </recommendedName>
    <alternativeName>
        <fullName evidence="1">Prolyl-tRNA synthetase</fullName>
        <shortName evidence="1">ProRS</shortName>
    </alternativeName>
</protein>
<comment type="function">
    <text evidence="1">Catalyzes the attachment of proline to tRNA(Pro) in a two-step reaction: proline is first activated by ATP to form Pro-AMP and then transferred to the acceptor end of tRNA(Pro). As ProRS can inadvertently accommodate and process non-cognate amino acids such as alanine and cysteine, to avoid such errors it has two additional distinct editing activities against alanine. One activity is designated as 'pretransfer' editing and involves the tRNA(Pro)-independent hydrolysis of activated Ala-AMP. The other activity is designated 'posttransfer' editing and involves deacylation of mischarged Ala-tRNA(Pro). The misacylated Cys-tRNA(Pro) is not edited by ProRS.</text>
</comment>
<comment type="catalytic activity">
    <reaction evidence="1">
        <text>tRNA(Pro) + L-proline + ATP = L-prolyl-tRNA(Pro) + AMP + diphosphate</text>
        <dbReference type="Rhea" id="RHEA:14305"/>
        <dbReference type="Rhea" id="RHEA-COMP:9700"/>
        <dbReference type="Rhea" id="RHEA-COMP:9702"/>
        <dbReference type="ChEBI" id="CHEBI:30616"/>
        <dbReference type="ChEBI" id="CHEBI:33019"/>
        <dbReference type="ChEBI" id="CHEBI:60039"/>
        <dbReference type="ChEBI" id="CHEBI:78442"/>
        <dbReference type="ChEBI" id="CHEBI:78532"/>
        <dbReference type="ChEBI" id="CHEBI:456215"/>
        <dbReference type="EC" id="6.1.1.15"/>
    </reaction>
</comment>
<comment type="subunit">
    <text evidence="1">Homodimer.</text>
</comment>
<comment type="subcellular location">
    <subcellularLocation>
        <location evidence="1">Cytoplasm</location>
    </subcellularLocation>
</comment>
<comment type="domain">
    <text evidence="1">Consists of three domains: the N-terminal catalytic domain, the editing domain and the C-terminal anticodon-binding domain.</text>
</comment>
<comment type="similarity">
    <text evidence="1">Belongs to the class-II aminoacyl-tRNA synthetase family. ProS type 1 subfamily.</text>
</comment>
<gene>
    <name evidence="1" type="primary">proS</name>
    <name type="ordered locus">Bcen_0105</name>
</gene>
<keyword id="KW-0030">Aminoacyl-tRNA synthetase</keyword>
<keyword id="KW-0067">ATP-binding</keyword>
<keyword id="KW-0963">Cytoplasm</keyword>
<keyword id="KW-0436">Ligase</keyword>
<keyword id="KW-0547">Nucleotide-binding</keyword>
<keyword id="KW-0648">Protein biosynthesis</keyword>
<reference key="1">
    <citation type="submission" date="2006-05" db="EMBL/GenBank/DDBJ databases">
        <title>Complete sequence of chromosome 1 of Burkholderia cenocepacia AU 1054.</title>
        <authorList>
            <consortium name="US DOE Joint Genome Institute"/>
            <person name="Copeland A."/>
            <person name="Lucas S."/>
            <person name="Lapidus A."/>
            <person name="Barry K."/>
            <person name="Detter J.C."/>
            <person name="Glavina del Rio T."/>
            <person name="Hammon N."/>
            <person name="Israni S."/>
            <person name="Dalin E."/>
            <person name="Tice H."/>
            <person name="Pitluck S."/>
            <person name="Chain P."/>
            <person name="Malfatti S."/>
            <person name="Shin M."/>
            <person name="Vergez L."/>
            <person name="Schmutz J."/>
            <person name="Larimer F."/>
            <person name="Land M."/>
            <person name="Hauser L."/>
            <person name="Kyrpides N."/>
            <person name="Lykidis A."/>
            <person name="LiPuma J.J."/>
            <person name="Konstantinidis K."/>
            <person name="Tiedje J.M."/>
            <person name="Richardson P."/>
        </authorList>
    </citation>
    <scope>NUCLEOTIDE SEQUENCE [LARGE SCALE GENOMIC DNA]</scope>
    <source>
        <strain>AU 1054</strain>
    </source>
</reference>
<dbReference type="EC" id="6.1.1.15" evidence="1"/>
<dbReference type="EMBL" id="CP000378">
    <property type="protein sequence ID" value="ABF75019.1"/>
    <property type="molecule type" value="Genomic_DNA"/>
</dbReference>
<dbReference type="SMR" id="Q1BZD6"/>
<dbReference type="HOGENOM" id="CLU_016739_0_0_4"/>
<dbReference type="GO" id="GO:0005829">
    <property type="term" value="C:cytosol"/>
    <property type="evidence" value="ECO:0007669"/>
    <property type="project" value="TreeGrafter"/>
</dbReference>
<dbReference type="GO" id="GO:0002161">
    <property type="term" value="F:aminoacyl-tRNA deacylase activity"/>
    <property type="evidence" value="ECO:0007669"/>
    <property type="project" value="InterPro"/>
</dbReference>
<dbReference type="GO" id="GO:0005524">
    <property type="term" value="F:ATP binding"/>
    <property type="evidence" value="ECO:0007669"/>
    <property type="project" value="UniProtKB-UniRule"/>
</dbReference>
<dbReference type="GO" id="GO:0004827">
    <property type="term" value="F:proline-tRNA ligase activity"/>
    <property type="evidence" value="ECO:0007669"/>
    <property type="project" value="UniProtKB-UniRule"/>
</dbReference>
<dbReference type="GO" id="GO:0006433">
    <property type="term" value="P:prolyl-tRNA aminoacylation"/>
    <property type="evidence" value="ECO:0007669"/>
    <property type="project" value="UniProtKB-UniRule"/>
</dbReference>
<dbReference type="CDD" id="cd04334">
    <property type="entry name" value="ProRS-INS"/>
    <property type="match status" value="1"/>
</dbReference>
<dbReference type="CDD" id="cd00861">
    <property type="entry name" value="ProRS_anticodon_short"/>
    <property type="match status" value="1"/>
</dbReference>
<dbReference type="CDD" id="cd00779">
    <property type="entry name" value="ProRS_core_prok"/>
    <property type="match status" value="1"/>
</dbReference>
<dbReference type="FunFam" id="3.30.930.10:FF:000043">
    <property type="entry name" value="Proline--tRNA ligase"/>
    <property type="match status" value="1"/>
</dbReference>
<dbReference type="FunFam" id="3.30.930.10:FF:000097">
    <property type="entry name" value="Proline--tRNA ligase"/>
    <property type="match status" value="1"/>
</dbReference>
<dbReference type="Gene3D" id="3.40.50.800">
    <property type="entry name" value="Anticodon-binding domain"/>
    <property type="match status" value="1"/>
</dbReference>
<dbReference type="Gene3D" id="3.30.930.10">
    <property type="entry name" value="Bira Bifunctional Protein, Domain 2"/>
    <property type="match status" value="2"/>
</dbReference>
<dbReference type="Gene3D" id="3.90.960.10">
    <property type="entry name" value="YbaK/aminoacyl-tRNA synthetase-associated domain"/>
    <property type="match status" value="1"/>
</dbReference>
<dbReference type="HAMAP" id="MF_01569">
    <property type="entry name" value="Pro_tRNA_synth_type1"/>
    <property type="match status" value="1"/>
</dbReference>
<dbReference type="InterPro" id="IPR002314">
    <property type="entry name" value="aa-tRNA-synt_IIb"/>
</dbReference>
<dbReference type="InterPro" id="IPR006195">
    <property type="entry name" value="aa-tRNA-synth_II"/>
</dbReference>
<dbReference type="InterPro" id="IPR045864">
    <property type="entry name" value="aa-tRNA-synth_II/BPL/LPL"/>
</dbReference>
<dbReference type="InterPro" id="IPR004154">
    <property type="entry name" value="Anticodon-bd"/>
</dbReference>
<dbReference type="InterPro" id="IPR036621">
    <property type="entry name" value="Anticodon-bd_dom_sf"/>
</dbReference>
<dbReference type="InterPro" id="IPR002316">
    <property type="entry name" value="Pro-tRNA-ligase_IIa"/>
</dbReference>
<dbReference type="InterPro" id="IPR004500">
    <property type="entry name" value="Pro-tRNA-synth_IIa_bac-type"/>
</dbReference>
<dbReference type="InterPro" id="IPR023717">
    <property type="entry name" value="Pro-tRNA-Synthase_IIa_type1"/>
</dbReference>
<dbReference type="InterPro" id="IPR050062">
    <property type="entry name" value="Pro-tRNA_synthetase"/>
</dbReference>
<dbReference type="InterPro" id="IPR044140">
    <property type="entry name" value="ProRS_anticodon_short"/>
</dbReference>
<dbReference type="InterPro" id="IPR033730">
    <property type="entry name" value="ProRS_core_prok"/>
</dbReference>
<dbReference type="InterPro" id="IPR036754">
    <property type="entry name" value="YbaK/aa-tRNA-synt-asso_dom_sf"/>
</dbReference>
<dbReference type="InterPro" id="IPR007214">
    <property type="entry name" value="YbaK/aa-tRNA-synth-assoc-dom"/>
</dbReference>
<dbReference type="NCBIfam" id="NF006625">
    <property type="entry name" value="PRK09194.1"/>
    <property type="match status" value="1"/>
</dbReference>
<dbReference type="NCBIfam" id="TIGR00409">
    <property type="entry name" value="proS_fam_II"/>
    <property type="match status" value="1"/>
</dbReference>
<dbReference type="PANTHER" id="PTHR42753">
    <property type="entry name" value="MITOCHONDRIAL RIBOSOME PROTEIN L39/PROLYL-TRNA LIGASE FAMILY MEMBER"/>
    <property type="match status" value="1"/>
</dbReference>
<dbReference type="PANTHER" id="PTHR42753:SF2">
    <property type="entry name" value="PROLINE--TRNA LIGASE"/>
    <property type="match status" value="1"/>
</dbReference>
<dbReference type="Pfam" id="PF03129">
    <property type="entry name" value="HGTP_anticodon"/>
    <property type="match status" value="1"/>
</dbReference>
<dbReference type="Pfam" id="PF00587">
    <property type="entry name" value="tRNA-synt_2b"/>
    <property type="match status" value="1"/>
</dbReference>
<dbReference type="Pfam" id="PF04073">
    <property type="entry name" value="tRNA_edit"/>
    <property type="match status" value="1"/>
</dbReference>
<dbReference type="PIRSF" id="PIRSF001535">
    <property type="entry name" value="ProRS_1"/>
    <property type="match status" value="1"/>
</dbReference>
<dbReference type="PRINTS" id="PR01046">
    <property type="entry name" value="TRNASYNTHPRO"/>
</dbReference>
<dbReference type="SUPFAM" id="SSF52954">
    <property type="entry name" value="Class II aaRS ABD-related"/>
    <property type="match status" value="1"/>
</dbReference>
<dbReference type="SUPFAM" id="SSF55681">
    <property type="entry name" value="Class II aaRS and biotin synthetases"/>
    <property type="match status" value="1"/>
</dbReference>
<dbReference type="SUPFAM" id="SSF55826">
    <property type="entry name" value="YbaK/ProRS associated domain"/>
    <property type="match status" value="1"/>
</dbReference>
<dbReference type="PROSITE" id="PS50862">
    <property type="entry name" value="AA_TRNA_LIGASE_II"/>
    <property type="match status" value="1"/>
</dbReference>
<feature type="chain" id="PRO_0000288314" description="Proline--tRNA ligase">
    <location>
        <begin position="1"/>
        <end position="578"/>
    </location>
</feature>
<accession>Q1BZD6</accession>
<organism>
    <name type="scientific">Burkholderia orbicola (strain AU 1054)</name>
    <dbReference type="NCBI Taxonomy" id="331271"/>
    <lineage>
        <taxon>Bacteria</taxon>
        <taxon>Pseudomonadati</taxon>
        <taxon>Pseudomonadota</taxon>
        <taxon>Betaproteobacteria</taxon>
        <taxon>Burkholderiales</taxon>
        <taxon>Burkholderiaceae</taxon>
        <taxon>Burkholderia</taxon>
        <taxon>Burkholderia cepacia complex</taxon>
        <taxon>Burkholderia orbicola</taxon>
    </lineage>
</organism>